<feature type="chain" id="PRO_0000147052" description="Pyruvate, phosphate dikinase">
    <location>
        <begin position="1"/>
        <end position="884"/>
    </location>
</feature>
<feature type="region of interest" description="N-terminal">
    <location>
        <begin position="1"/>
        <end position="351"/>
    </location>
</feature>
<feature type="region of interest" description="Linker 1">
    <location>
        <begin position="352"/>
        <end position="408"/>
    </location>
</feature>
<feature type="region of interest" description="Central">
    <location>
        <begin position="409"/>
        <end position="507"/>
    </location>
</feature>
<feature type="region of interest" description="Linker 2">
    <location>
        <begin position="508"/>
        <end position="542"/>
    </location>
</feature>
<feature type="region of interest" description="C-terminal">
    <location>
        <begin position="543"/>
        <end position="884"/>
    </location>
</feature>
<feature type="active site" description="Tele-phosphohistidine intermediate" evidence="2">
    <location>
        <position position="464"/>
    </location>
</feature>
<feature type="active site" description="Proton donor" evidence="2">
    <location>
        <position position="839"/>
    </location>
</feature>
<feature type="binding site" evidence="3">
    <location>
        <position position="99"/>
    </location>
    <ligand>
        <name>ATP</name>
        <dbReference type="ChEBI" id="CHEBI:30616"/>
    </ligand>
</feature>
<feature type="binding site" evidence="2">
    <location>
        <position position="570"/>
    </location>
    <ligand>
        <name>substrate</name>
    </ligand>
</feature>
<feature type="binding site" evidence="2">
    <location>
        <position position="626"/>
    </location>
    <ligand>
        <name>substrate</name>
    </ligand>
</feature>
<feature type="binding site" evidence="2">
    <location>
        <position position="753"/>
    </location>
    <ligand>
        <name>Mg(2+)</name>
        <dbReference type="ChEBI" id="CHEBI:18420"/>
    </ligand>
</feature>
<feature type="binding site" evidence="2">
    <location>
        <position position="753"/>
    </location>
    <ligand>
        <name>substrate</name>
    </ligand>
</feature>
<feature type="binding site" evidence="2">
    <location>
        <position position="774"/>
    </location>
    <ligand>
        <name>substrate</name>
    </ligand>
</feature>
<feature type="binding site" evidence="2">
    <location>
        <position position="775"/>
    </location>
    <ligand>
        <name>substrate</name>
    </ligand>
</feature>
<feature type="binding site" evidence="2">
    <location>
        <position position="776"/>
    </location>
    <ligand>
        <name>substrate</name>
    </ligand>
</feature>
<feature type="binding site" evidence="2">
    <location>
        <position position="777"/>
    </location>
    <ligand>
        <name>Mg(2+)</name>
        <dbReference type="ChEBI" id="CHEBI:18420"/>
    </ligand>
</feature>
<feature type="binding site" evidence="2">
    <location>
        <position position="777"/>
    </location>
    <ligand>
        <name>substrate</name>
    </ligand>
</feature>
<feature type="modified residue" description="Phosphothreonine; by PDRP1" evidence="1">
    <location>
        <position position="462"/>
    </location>
</feature>
<sequence length="884" mass="97630">MSTRRVYFFGETPENQPANSELCRKVLGGKGISLAAMIKLGMPVPLGFTITCQTCVEYQKTASWPKGLKEEVASNLKLLEEKMGKTFGDNTNPLLVSVRSGAAVSMPGMMDTILNLGLNDESVKGLAAVTGNARFAYDSYRRFMQMFGDVCLGIDHDKFEHALDAVKTRYGRKTDPELTADELEEVCEAYRKICVAATGKTFPQCPHEQLELAINAVFKSWTNPRAQAYRTLNKLDHNMGTAVNVQSMVFGNTGDDSGTGVGFTRCPKTGEKFSYLYGEFLQNAQGEDVVAGIRTPVNLKEMPTINASWKACYDELSLIYAKLEGYYNDMVDLEFTVENGKLWMLQARAGKRTGFAMVRIAIDMCKEGMLTEEEALLRIDANKINEFLFKRFDPSVKPVVLGKGIPASPGAAVGVICFCPMRTCELAEQGKKVILTRIETSPEDILGMDRAVGILTARGGQTSHAAVVARGMGKCCVAGADCCQINYATKTLVIGDRKFKEGDFISINGTTGEIYNGAVQTIEPGITDDLQTIMDWSDKYRVLKIRTNADTPHDAAVARKFGAEGIGLCRTEHMFFAADRIMAMREMILSDDEGARRTALNKLLPFQREDFIGIFKAMDGKGVNIRLLDPPLHEFLPHTRDLQKKLAEDMNKKHRHIHERVEDLHEVNPMLGFRGVRLGIVYPEISEMQVRAILEAACIVSREGVTVKPEIMIPVLFSENEMEIMHALVNRVAASVFKEHGTTVDYEVGTMIELPRACVMADKIAQTAQYFSFGTNDLTQTTFGISRDDAGKFIPKYIDRGIFKVDPFVTLDQQGVGALMKMAIEGGRSTRTDMKIGICGEQTDPASILFLHKIGLNYVSCSPYRVPVARVAAAIAAIKARTNQ</sequence>
<dbReference type="EC" id="2.7.9.1"/>
<dbReference type="EMBL" id="Z54168">
    <property type="protein sequence ID" value="CAA90880.1"/>
    <property type="molecule type" value="Genomic_DNA"/>
</dbReference>
<dbReference type="SMR" id="P51776"/>
<dbReference type="VEuPathDB" id="GiardiaDB:DHA2_9909"/>
<dbReference type="VEuPathDB" id="GiardiaDB:GL50581_4299"/>
<dbReference type="VEuPathDB" id="GiardiaDB:GL50803_009909"/>
<dbReference type="VEuPathDB" id="GiardiaDB:QR46_0698"/>
<dbReference type="eggNOG" id="ENOG502QREJ">
    <property type="taxonomic scope" value="Eukaryota"/>
</dbReference>
<dbReference type="BRENDA" id="2.7.9.1">
    <property type="organism ID" value="2401"/>
</dbReference>
<dbReference type="GO" id="GO:0005524">
    <property type="term" value="F:ATP binding"/>
    <property type="evidence" value="ECO:0007669"/>
    <property type="project" value="UniProtKB-KW"/>
</dbReference>
<dbReference type="GO" id="GO:0016301">
    <property type="term" value="F:kinase activity"/>
    <property type="evidence" value="ECO:0007669"/>
    <property type="project" value="UniProtKB-KW"/>
</dbReference>
<dbReference type="GO" id="GO:0046872">
    <property type="term" value="F:metal ion binding"/>
    <property type="evidence" value="ECO:0007669"/>
    <property type="project" value="UniProtKB-KW"/>
</dbReference>
<dbReference type="GO" id="GO:0050242">
    <property type="term" value="F:pyruvate, phosphate dikinase activity"/>
    <property type="evidence" value="ECO:0007669"/>
    <property type="project" value="UniProtKB-EC"/>
</dbReference>
<dbReference type="Gene3D" id="1.20.80.30">
    <property type="match status" value="1"/>
</dbReference>
<dbReference type="Gene3D" id="3.30.1490.20">
    <property type="entry name" value="ATP-grasp fold, A domain"/>
    <property type="match status" value="1"/>
</dbReference>
<dbReference type="Gene3D" id="3.30.470.20">
    <property type="entry name" value="ATP-grasp fold, B domain"/>
    <property type="match status" value="1"/>
</dbReference>
<dbReference type="Gene3D" id="3.20.20.60">
    <property type="entry name" value="Phosphoenolpyruvate-binding domains"/>
    <property type="match status" value="1"/>
</dbReference>
<dbReference type="Gene3D" id="3.50.30.10">
    <property type="entry name" value="Phosphohistidine domain"/>
    <property type="match status" value="1"/>
</dbReference>
<dbReference type="Gene3D" id="1.10.189.10">
    <property type="entry name" value="Pyruvate Phosphate Dikinase, domain 2"/>
    <property type="match status" value="1"/>
</dbReference>
<dbReference type="InterPro" id="IPR013815">
    <property type="entry name" value="ATP_grasp_subdomain_1"/>
</dbReference>
<dbReference type="InterPro" id="IPR008279">
    <property type="entry name" value="PEP-util_enz_mobile_dom"/>
</dbReference>
<dbReference type="InterPro" id="IPR018274">
    <property type="entry name" value="PEP_util_AS"/>
</dbReference>
<dbReference type="InterPro" id="IPR000121">
    <property type="entry name" value="PEP_util_C"/>
</dbReference>
<dbReference type="InterPro" id="IPR023151">
    <property type="entry name" value="PEP_util_CS"/>
</dbReference>
<dbReference type="InterPro" id="IPR036637">
    <property type="entry name" value="Phosphohistidine_dom_sf"/>
</dbReference>
<dbReference type="InterPro" id="IPR002192">
    <property type="entry name" value="PPDK_AMP/ATP-bd"/>
</dbReference>
<dbReference type="InterPro" id="IPR010121">
    <property type="entry name" value="Pyruvate_phosphate_dikinase"/>
</dbReference>
<dbReference type="InterPro" id="IPR015813">
    <property type="entry name" value="Pyrv/PenolPyrv_kinase-like_dom"/>
</dbReference>
<dbReference type="InterPro" id="IPR040442">
    <property type="entry name" value="Pyrv_kinase-like_dom_sf"/>
</dbReference>
<dbReference type="NCBIfam" id="TIGR01828">
    <property type="entry name" value="pyru_phos_dikin"/>
    <property type="match status" value="1"/>
</dbReference>
<dbReference type="PANTHER" id="PTHR22931">
    <property type="entry name" value="PHOSPHOENOLPYRUVATE DIKINASE-RELATED"/>
    <property type="match status" value="1"/>
</dbReference>
<dbReference type="PANTHER" id="PTHR22931:SF9">
    <property type="entry name" value="PYRUVATE, PHOSPHATE DIKINASE 1, CHLOROPLASTIC"/>
    <property type="match status" value="1"/>
</dbReference>
<dbReference type="Pfam" id="PF00391">
    <property type="entry name" value="PEP-utilizers"/>
    <property type="match status" value="1"/>
</dbReference>
<dbReference type="Pfam" id="PF02896">
    <property type="entry name" value="PEP-utilizers_C"/>
    <property type="match status" value="1"/>
</dbReference>
<dbReference type="Pfam" id="PF01326">
    <property type="entry name" value="PPDK_N"/>
    <property type="match status" value="2"/>
</dbReference>
<dbReference type="PIRSF" id="PIRSF000853">
    <property type="entry name" value="PPDK"/>
    <property type="match status" value="1"/>
</dbReference>
<dbReference type="SUPFAM" id="SSF56059">
    <property type="entry name" value="Glutathione synthetase ATP-binding domain-like"/>
    <property type="match status" value="1"/>
</dbReference>
<dbReference type="SUPFAM" id="SSF51621">
    <property type="entry name" value="Phosphoenolpyruvate/pyruvate domain"/>
    <property type="match status" value="1"/>
</dbReference>
<dbReference type="SUPFAM" id="SSF52009">
    <property type="entry name" value="Phosphohistidine domain"/>
    <property type="match status" value="1"/>
</dbReference>
<dbReference type="PROSITE" id="PS00742">
    <property type="entry name" value="PEP_ENZYMES_2"/>
    <property type="match status" value="1"/>
</dbReference>
<dbReference type="PROSITE" id="PS00370">
    <property type="entry name" value="PEP_ENZYMES_PHOS_SITE"/>
    <property type="match status" value="1"/>
</dbReference>
<reference key="1">
    <citation type="journal article" date="1996" name="Mol. Biochem. Parasitol.">
        <title>Cloning and characterization of the gene encoding pyruvate phosphate dikinase from Giardia duodenalis.</title>
        <authorList>
            <person name="Bruderer T."/>
            <person name="Wehrli C."/>
            <person name="Koehler P."/>
        </authorList>
    </citation>
    <scope>NUCLEOTIDE SEQUENCE [GENOMIC DNA]</scope>
    <source>
        <strain>CH-O2-4A1</strain>
    </source>
</reference>
<organism>
    <name type="scientific">Giardia intestinalis</name>
    <name type="common">Giardia lamblia</name>
    <dbReference type="NCBI Taxonomy" id="5741"/>
    <lineage>
        <taxon>Eukaryota</taxon>
        <taxon>Metamonada</taxon>
        <taxon>Diplomonadida</taxon>
        <taxon>Hexamitidae</taxon>
        <taxon>Giardiinae</taxon>
        <taxon>Giardia</taxon>
    </lineage>
</organism>
<name>PPDK_GIAIN</name>
<comment type="function">
    <text>Catalyzes the reversible phosphorylation of pyruvate and phosphate.</text>
</comment>
<comment type="catalytic activity">
    <reaction>
        <text>pyruvate + phosphate + ATP = phosphoenolpyruvate + AMP + diphosphate + H(+)</text>
        <dbReference type="Rhea" id="RHEA:10756"/>
        <dbReference type="ChEBI" id="CHEBI:15361"/>
        <dbReference type="ChEBI" id="CHEBI:15378"/>
        <dbReference type="ChEBI" id="CHEBI:30616"/>
        <dbReference type="ChEBI" id="CHEBI:33019"/>
        <dbReference type="ChEBI" id="CHEBI:43474"/>
        <dbReference type="ChEBI" id="CHEBI:58702"/>
        <dbReference type="ChEBI" id="CHEBI:456215"/>
        <dbReference type="EC" id="2.7.9.1"/>
    </reaction>
</comment>
<comment type="cofactor">
    <cofactor evidence="2">
        <name>Mg(2+)</name>
        <dbReference type="ChEBI" id="CHEBI:18420"/>
    </cofactor>
</comment>
<comment type="activity regulation">
    <text evidence="1">Activated by light-induced dephosphorylation. Inhibited by dark-induced phosphorylation. Both reactions are catalyzed by PDRP1 (By similarity).</text>
</comment>
<comment type="subunit">
    <text evidence="1">Homodimer.</text>
</comment>
<comment type="domain">
    <text evidence="1">The N-terminal domain contains the ATP/Pi binding site, the central domain the pyrophosphate/phosphate carrier histidine, and the C-terminal domain the pyruvate binding site.</text>
</comment>
<comment type="PTM">
    <text evidence="1">Phosphorylation of Thr-462 in the dark inactivates the enzyme. Dephosphorylation upon light stimulation reactivates the enzyme (By similarity).</text>
</comment>
<comment type="miscellaneous">
    <text>The reaction takes place in three steps, each mediated by a carrier histidine residue located on the surface of the central domain. The two first partial reactions are catalyzed at an active site located on the N-terminal domain, and the third partial reaction is catalyzed at an active site located on the C-terminal domain. For catalytic turnover, the central domain swivels from the concave surface of the N-terminal domain to that of the C-terminal domain.</text>
</comment>
<comment type="similarity">
    <text evidence="4">Belongs to the PEP-utilizing enzyme family.</text>
</comment>
<evidence type="ECO:0000250" key="1"/>
<evidence type="ECO:0000250" key="2">
    <source>
        <dbReference type="UniProtKB" id="P11155"/>
    </source>
</evidence>
<evidence type="ECO:0000255" key="3"/>
<evidence type="ECO:0000305" key="4"/>
<accession>P51776</accession>
<keyword id="KW-0067">ATP-binding</keyword>
<keyword id="KW-0418">Kinase</keyword>
<keyword id="KW-0460">Magnesium</keyword>
<keyword id="KW-0479">Metal-binding</keyword>
<keyword id="KW-0547">Nucleotide-binding</keyword>
<keyword id="KW-0597">Phosphoprotein</keyword>
<keyword id="KW-0808">Transferase</keyword>
<protein>
    <recommendedName>
        <fullName>Pyruvate, phosphate dikinase</fullName>
        <ecNumber>2.7.9.1</ecNumber>
    </recommendedName>
    <alternativeName>
        <fullName>Pyruvate, orthophosphate dikinase</fullName>
    </alternativeName>
</protein>
<proteinExistence type="inferred from homology"/>